<proteinExistence type="evidence at protein level"/>
<keyword id="KW-0963">Cytoplasm</keyword>
<keyword id="KW-0349">Heme</keyword>
<keyword id="KW-0408">Iron</keyword>
<keyword id="KW-0479">Metal-binding</keyword>
<keyword id="KW-0944">Nitration</keyword>
<keyword id="KW-0535">Nitrogen fixation</keyword>
<keyword id="KW-0536">Nodulation</keyword>
<keyword id="KW-0539">Nucleus</keyword>
<keyword id="KW-0561">Oxygen transport</keyword>
<keyword id="KW-0597">Phosphoprotein</keyword>
<keyword id="KW-0813">Transport</keyword>
<gene>
    <name evidence="11 13" type="primary">LB1</name>
    <name evidence="14" type="synonym">SLJLB</name>
    <name evidence="16" type="ORF">Lj5g3v0035290</name>
    <name evidence="16" type="ORF">LotjaGi5g1v0024700</name>
</gene>
<organism>
    <name type="scientific">Lotus japonicus</name>
    <name type="common">Lotus corniculatus var. japonicus</name>
    <dbReference type="NCBI Taxonomy" id="34305"/>
    <lineage>
        <taxon>Eukaryota</taxon>
        <taxon>Viridiplantae</taxon>
        <taxon>Streptophyta</taxon>
        <taxon>Embryophyta</taxon>
        <taxon>Tracheophyta</taxon>
        <taxon>Spermatophyta</taxon>
        <taxon>Magnoliopsida</taxon>
        <taxon>eudicotyledons</taxon>
        <taxon>Gunneridae</taxon>
        <taxon>Pentapetalae</taxon>
        <taxon>rosids</taxon>
        <taxon>fabids</taxon>
        <taxon>Fabales</taxon>
        <taxon>Fabaceae</taxon>
        <taxon>Papilionoideae</taxon>
        <taxon>50 kb inversion clade</taxon>
        <taxon>NPAAA clade</taxon>
        <taxon>Hologalegina</taxon>
        <taxon>robinioid clade</taxon>
        <taxon>Loteae</taxon>
        <taxon>Lotus</taxon>
    </lineage>
</organism>
<sequence>MGFTAQQDALVGSSYEAFKQNLPSNSVLFYTLILEKAPAAKDMFSFLKASGPTHSPQLQAHAEKVFGLTRDAAAQLLAKGEVTLADAGLGAVHVQKAVADPHFAVVKEALLKTVQAAVGDKWSEDLSTAWGVAYDGLAAAIKKAMS</sequence>
<protein>
    <recommendedName>
        <fullName evidence="11">Leghemoglobin 1</fullName>
        <shortName evidence="12">LegH</shortName>
        <shortName evidence="11 13">LjLb1</shortName>
    </recommendedName>
</protein>
<feature type="initiator methionine" description="Removed" evidence="1">
    <location>
        <position position="1"/>
    </location>
</feature>
<feature type="chain" id="PRO_0000460290" description="Leghemoglobin 1">
    <location>
        <begin position="2"/>
        <end position="146"/>
    </location>
</feature>
<feature type="domain" description="Globin" evidence="4">
    <location>
        <begin position="2"/>
        <end position="146"/>
    </location>
</feature>
<feature type="binding site" evidence="3">
    <location>
        <position position="45"/>
    </location>
    <ligand>
        <name>heme b</name>
        <dbReference type="ChEBI" id="CHEBI:60344"/>
    </ligand>
</feature>
<feature type="binding site" evidence="3">
    <location>
        <position position="61"/>
    </location>
    <ligand>
        <name>O2</name>
        <dbReference type="ChEBI" id="CHEBI:15379"/>
    </ligand>
</feature>
<feature type="binding site" evidence="3">
    <location>
        <position position="64"/>
    </location>
    <ligand>
        <name>heme b</name>
        <dbReference type="ChEBI" id="CHEBI:60344"/>
    </ligand>
</feature>
<feature type="binding site" description="proximal binding residue" evidence="4">
    <location>
        <position position="93"/>
    </location>
    <ligand>
        <name>heme b</name>
        <dbReference type="ChEBI" id="CHEBI:60344"/>
    </ligand>
    <ligandPart>
        <name>Fe</name>
        <dbReference type="ChEBI" id="CHEBI:18248"/>
    </ligandPart>
</feature>
<feature type="binding site" evidence="3">
    <location>
        <position position="96"/>
    </location>
    <ligand>
        <name>heme b</name>
        <dbReference type="ChEBI" id="CHEBI:60344"/>
    </ligand>
</feature>
<feature type="modified residue" description="Phosphoserine; by CCAMK" evidence="9">
    <location>
        <position position="13"/>
    </location>
</feature>
<feature type="modified residue" description="Phosphoserine; by CCAMK" evidence="9">
    <location>
        <position position="14"/>
    </location>
</feature>
<feature type="modified residue" description="Nitrated tyrosine" evidence="2">
    <location>
        <position position="30"/>
    </location>
</feature>
<feature type="modified residue" description="Phosphoserine; by CCAMK" evidence="9">
    <location>
        <position position="45"/>
    </location>
</feature>
<feature type="modified residue" description="Phosphoserine; by CCAMK" evidence="9">
    <location>
        <position position="55"/>
    </location>
</feature>
<feature type="modified residue" description="Phosphoserine; by CCAMK" evidence="9">
    <location>
        <position position="123"/>
    </location>
</feature>
<feature type="modified residue" description="Nitrated tyrosine" evidence="2">
    <location>
        <position position="134"/>
    </location>
</feature>
<feature type="mutagenesis site" description="Phosphomimetic mutant leading to a reduced oxygen consumption and to the delivery of oxygen O(2) to symbiosomes." evidence="9">
    <original>S</original>
    <variation>D</variation>
    <location>
        <position position="45"/>
    </location>
</feature>
<feature type="mutagenesis site" description="Phosphomimetic mutant but unchanged oxygen consumption." evidence="9">
    <original>S</original>
    <variation>D</variation>
    <location>
        <position position="55"/>
    </location>
</feature>
<feature type="sequence conflict" description="In Ref. 2; AFK43403." evidence="15" ref="2">
    <original>A</original>
    <variation>D</variation>
    <location>
        <position position="91"/>
    </location>
</feature>
<comment type="function">
    <text evidence="6 7 8 9 10">Leghemoglobin that reversibly binds oxygen O(2) through a pentacoordinated heme iron (PubMed:25868982). In root nodules, facilitates the diffusion of oxygen to the bacteroids while preventing the bacterial nitrogenase from being inactivated by buffering dioxygen, nitric oxide and carbon monoxide, and promoting the formation of reactive oxygen species (ROS, e.g. H(2)O(2)) (PubMed:15797021, PubMed:17990967, PubMed:19522562, PubMed:25868982, PubMed:31355948). This role is essential for symbiotic nitrogen fixation (SNF) (PubMed:15797021, PubMed:17990967, PubMed:19522562, PubMed:25868982, PubMed:31355948).</text>
</comment>
<comment type="subunit">
    <text evidence="3">Monomer.</text>
</comment>
<comment type="subcellular location">
    <subcellularLocation>
        <location evidence="3">Cytoplasm</location>
        <location evidence="3">Cytosol</location>
    </subcellularLocation>
    <subcellularLocation>
        <location evidence="3">Nucleus</location>
    </subcellularLocation>
</comment>
<comment type="tissue specificity">
    <text evidence="5 10">Specifically and strongly expressed in root nodules and at low levels in seedlings.</text>
</comment>
<comment type="developmental stage">
    <text evidence="10">In nodulating roots, accumulates during nodule maturation, and fades out progressively in aging and senescent nodules.</text>
</comment>
<comment type="induction">
    <text evidence="10">Accumulates in developing root nodules upon inoculation with the symbiotic M.loti strain MAFF303099.</text>
</comment>
<comment type="PTM">
    <text evidence="2">Nitrated in effective nodules and particularly in hypoxic conditions; this mechanism may play a protective role in the symbiosis by buffering toxic peroxynitrite NO(2)(-). Nitration level decrease during nodule senescence.</text>
</comment>
<comment type="PTM">
    <text evidence="9">Phosphorylated by CCAMK at serine residues in a Ca(2+)-dependent manner; the phosphorylation at Ser-45 disrupts the molecular environment of its porphyrin ring oxygen binding pocket, thus leading to a reduced oxygen consumption and to the delivery of oxygen O(2) to symbiosomes.</text>
</comment>
<comment type="disruption phenotype">
    <text evidence="6 7 10">Normal growth and flowering under non-restrictive nutrient conditions, but classic symptoms of extreme nitrogen limitation under restrictive nutrient conditions, including severely stunted growth, increased root/shoot ratio and delayed flowering (PubMed:15797021). Following inoculation with symbiotic rhizobia, accumulation of free oxygen at the expense of reactive oxygen species (ROS, e.g. H(2)O(2)) production in root nodules leading to the loss of bacterial nitrogenase protein and the absence of symbiotic nitrogen fixation (SNF), as well as decreased ATP/ADP ratio; bacteroids of these impaired nodules exhibit altered ultrastructure due to disturbed bacterial differentiation (PubMed:15797021, PubMed:17990967). In symbiotic conditions, plants lacking leghemoglobins lb13 and lb123 have reduced growth and exhibit lower N(2) fixation in root nodules displaying ultrastructural alterations including abnormal mitochondria and large lytic vacuoles, associated with increased reactive oxygen species (ROS) accumulation as well as early nodules senescence (PubMed:31355948).</text>
</comment>
<comment type="similarity">
    <text evidence="15">Belongs to the plant globin family.</text>
</comment>
<name>LGB1_LOTJA</name>
<accession>Q3C1F7</accession>
<accession>I3ST11</accession>
<accession>Q9FXP9</accession>
<reference key="1">
    <citation type="journal article" date="2002" name="Plant Cell Physiol.">
        <title>Expression of symbiotic and nonsymbiotic globin genes responding to microsymbionts on Lotus japonicus.</title>
        <authorList>
            <person name="Uchiumi T."/>
            <person name="Shimoda Y."/>
            <person name="Tsuruta T."/>
            <person name="Mukoyoshi Y."/>
            <person name="Suzuki A."/>
            <person name="Senoo K."/>
            <person name="Sato S."/>
            <person name="Kato T."/>
            <person name="Tabata S."/>
            <person name="Higashi S."/>
            <person name="Abe M."/>
        </authorList>
    </citation>
    <scope>NUCLEOTIDE SEQUENCE [MRNA]</scope>
    <scope>TISSUE SPECIFICITY</scope>
    <source>
        <strain>cv. MG-20</strain>
        <tissue>Root nodule</tissue>
    </source>
</reference>
<reference key="2">
    <citation type="submission" date="2012-05" db="EMBL/GenBank/DDBJ databases">
        <authorList>
            <person name="Krishnakumar V."/>
            <person name="Cheung F."/>
            <person name="Xiao Y."/>
            <person name="Chan A."/>
            <person name="Moskal W.A."/>
            <person name="Town C.D."/>
        </authorList>
    </citation>
    <scope>NUCLEOTIDE SEQUENCE [MRNA]</scope>
</reference>
<reference key="3">
    <citation type="submission" date="2000-05" db="EMBL/GenBank/DDBJ databases">
        <title>Genomic leghemoglobin genes of Lotus japonicus.</title>
        <authorList>
            <person name="Uchiumi T."/>
            <person name="Tsuruta T."/>
            <person name="Suzuki A."/>
            <person name="Abe M."/>
            <person name="Higashi S."/>
        </authorList>
    </citation>
    <scope>NUCLEOTIDE SEQUENCE [GENOMIC DNA] OF 24-146</scope>
    <source>
        <strain>cv. Gifu</strain>
    </source>
</reference>
<reference key="4">
    <citation type="journal article" date="2005" name="Curr. Biol.">
        <title>Symbiotic leghemoglobins are crucial for nitrogen fixation in legume root nodules but not for general plant growth and development.</title>
        <authorList>
            <person name="Ott T."/>
            <person name="van Dongen J.T."/>
            <person name="Guenther C."/>
            <person name="Krusell L."/>
            <person name="Desbrosses G."/>
            <person name="Vigeolas H."/>
            <person name="Bock V."/>
            <person name="Czechowski T."/>
            <person name="Geigenberger P."/>
            <person name="Udvardi M.K."/>
        </authorList>
    </citation>
    <scope>FUNCTION</scope>
    <scope>DISRUPTION PHENOTYPE</scope>
    <source>
        <strain>cv. Gifu</strain>
    </source>
</reference>
<reference key="5">
    <citation type="journal article" date="2007" name="Mol. Plant Microbe Interact.">
        <title>Metabolism of reactive oxygen species is attenuated in leghemoglobin-deficient nodules of Lotus japonicus.</title>
        <authorList>
            <person name="Guenther C."/>
            <person name="Schlereth A."/>
            <person name="Udvardi M."/>
            <person name="Ott T."/>
        </authorList>
    </citation>
    <scope>FUNCTION</scope>
    <scope>DISRUPTION PHENOTYPE</scope>
    <source>
        <strain>cv. Gifu</strain>
    </source>
</reference>
<reference key="6">
    <citation type="journal article" date="2009" name="Mol. Plant Microbe Interact.">
        <title>Absence of symbiotic leghemoglobins alters bacteroid and plant cell differentiation during development of Lotus japonicus root nodules.</title>
        <authorList>
            <person name="Ott T."/>
            <person name="Sullivan J."/>
            <person name="James E.K."/>
            <person name="Flemetakis E."/>
            <person name="Guenther C."/>
            <person name="Gibon Y."/>
            <person name="Ronson C."/>
            <person name="Udvardi M."/>
        </authorList>
    </citation>
    <scope>FUNCTION</scope>
    <scope>DISRUPTION PHENOTYPE</scope>
    <source>
        <strain>cv. Gifu</strain>
    </source>
</reference>
<reference key="7">
    <citation type="journal article" date="2015" name="Protein J.">
        <title>Phosphorylation of leghemoglobin at S45 is most effective to disrupt the molecular environment of its oxygen binding pocket.</title>
        <authorList>
            <person name="Bhar K."/>
            <person name="Maity A."/>
            <person name="Ghosh A."/>
            <person name="Das T."/>
            <person name="Dastidar S.G."/>
            <person name="Siddhanta A."/>
        </authorList>
    </citation>
    <scope>FUNCTION</scope>
    <scope>PHOSPHORYLATION AT SER-13; SER-14; SER-45; SER-55 AND SER-123</scope>
    <scope>MUTAGENESIS OF SER-45 AND SER-55</scope>
</reference>
<reference key="8">
    <citation type="journal article" date="2019" name="New Phytol.">
        <title>CRISPR/Cas9 knockout of leghemoglobin genes in Lotus japonicus uncovers their synergistic roles in symbiotic nitrogen fixation.</title>
        <authorList>
            <person name="Wang L."/>
            <person name="Rubio M.C."/>
            <person name="Xin X."/>
            <person name="Zhang B."/>
            <person name="Fan Q."/>
            <person name="Wang Q."/>
            <person name="Ning G."/>
            <person name="Becana M."/>
            <person name="Duanmu D."/>
        </authorList>
    </citation>
    <scope>FUNCTION</scope>
    <scope>DISRUPTION PHENOTYPE</scope>
    <scope>TISSUE SPECIFICITY</scope>
    <scope>INDUCTION BY MESORHIZOBIUM LOTI</scope>
    <scope>DEVELOPMENTAL STAGE</scope>
    <source>
        <strain>cv. MG-20</strain>
    </source>
</reference>
<reference key="9">
    <citation type="journal article" date="2020" name="New Phytol.">
        <title>Hemoglobins in the legume-Rhizobium symbiosis.</title>
        <authorList>
            <person name="Larrainzar E."/>
            <person name="Villar I."/>
            <person name="Rubio M.C."/>
            <person name="Perez-Rontome C."/>
            <person name="Huertas R."/>
            <person name="Sato S."/>
            <person name="Mun J.-H."/>
            <person name="Becana M."/>
        </authorList>
    </citation>
    <scope>REVIEW ON PHYTOGLOBINS</scope>
    <scope>GENE FAMILY</scope>
    <scope>NOMENCLATURE</scope>
</reference>
<evidence type="ECO:0000250" key="1">
    <source>
        <dbReference type="UniProtKB" id="P02233"/>
    </source>
</evidence>
<evidence type="ECO:0000250" key="2">
    <source>
        <dbReference type="UniProtKB" id="P02234"/>
    </source>
</evidence>
<evidence type="ECO:0000250" key="3">
    <source>
        <dbReference type="UniProtKB" id="P02240"/>
    </source>
</evidence>
<evidence type="ECO:0000255" key="4">
    <source>
        <dbReference type="PROSITE-ProRule" id="PRU00238"/>
    </source>
</evidence>
<evidence type="ECO:0000269" key="5">
    <source>
    </source>
</evidence>
<evidence type="ECO:0000269" key="6">
    <source>
    </source>
</evidence>
<evidence type="ECO:0000269" key="7">
    <source>
    </source>
</evidence>
<evidence type="ECO:0000269" key="8">
    <source>
    </source>
</evidence>
<evidence type="ECO:0000269" key="9">
    <source>
    </source>
</evidence>
<evidence type="ECO:0000269" key="10">
    <source>
    </source>
</evidence>
<evidence type="ECO:0000303" key="11">
    <source>
    </source>
</evidence>
<evidence type="ECO:0000303" key="12">
    <source>
    </source>
</evidence>
<evidence type="ECO:0000303" key="13">
    <source>
    </source>
</evidence>
<evidence type="ECO:0000303" key="14">
    <source ref="3"/>
</evidence>
<evidence type="ECO:0000305" key="15"/>
<evidence type="ECO:0000305" key="16">
    <source>
    </source>
</evidence>
<dbReference type="EMBL" id="AB238217">
    <property type="protein sequence ID" value="BAE46736.1"/>
    <property type="molecule type" value="mRNA"/>
</dbReference>
<dbReference type="EMBL" id="BT143609">
    <property type="protein sequence ID" value="AFK43403.1"/>
    <property type="molecule type" value="mRNA"/>
</dbReference>
<dbReference type="EMBL" id="AB042716">
    <property type="protein sequence ID" value="BAB18106.1"/>
    <property type="molecule type" value="Genomic_DNA"/>
</dbReference>
<dbReference type="SMR" id="Q3C1F7"/>
<dbReference type="OrthoDB" id="2012505at2759"/>
<dbReference type="GO" id="GO:0005829">
    <property type="term" value="C:cytosol"/>
    <property type="evidence" value="ECO:0007669"/>
    <property type="project" value="UniProtKB-SubCell"/>
</dbReference>
<dbReference type="GO" id="GO:0043663">
    <property type="term" value="C:host bacteroid-containing symbiosome"/>
    <property type="evidence" value="ECO:0000314"/>
    <property type="project" value="UniProtKB"/>
</dbReference>
<dbReference type="GO" id="GO:0005634">
    <property type="term" value="C:nucleus"/>
    <property type="evidence" value="ECO:0007669"/>
    <property type="project" value="UniProtKB-SubCell"/>
</dbReference>
<dbReference type="GO" id="GO:0020037">
    <property type="term" value="F:heme binding"/>
    <property type="evidence" value="ECO:0007669"/>
    <property type="project" value="InterPro"/>
</dbReference>
<dbReference type="GO" id="GO:0046872">
    <property type="term" value="F:metal ion binding"/>
    <property type="evidence" value="ECO:0007669"/>
    <property type="project" value="UniProtKB-KW"/>
</dbReference>
<dbReference type="GO" id="GO:0019825">
    <property type="term" value="F:oxygen binding"/>
    <property type="evidence" value="ECO:0007669"/>
    <property type="project" value="InterPro"/>
</dbReference>
<dbReference type="GO" id="GO:0005344">
    <property type="term" value="F:oxygen carrier activity"/>
    <property type="evidence" value="ECO:0000315"/>
    <property type="project" value="UniProtKB"/>
</dbReference>
<dbReference type="GO" id="GO:0032364">
    <property type="term" value="P:intracellular oxygen homeostasis"/>
    <property type="evidence" value="ECO:0000315"/>
    <property type="project" value="UniProtKB"/>
</dbReference>
<dbReference type="GO" id="GO:0009877">
    <property type="term" value="P:nodulation"/>
    <property type="evidence" value="ECO:0000315"/>
    <property type="project" value="UniProtKB"/>
</dbReference>
<dbReference type="GO" id="GO:0009609">
    <property type="term" value="P:response to symbiotic bacterium"/>
    <property type="evidence" value="ECO:0000315"/>
    <property type="project" value="UniProtKB"/>
</dbReference>
<dbReference type="Gene3D" id="1.10.490.10">
    <property type="entry name" value="Globins"/>
    <property type="match status" value="1"/>
</dbReference>
<dbReference type="InterPro" id="IPR000971">
    <property type="entry name" value="Globin"/>
</dbReference>
<dbReference type="InterPro" id="IPR009050">
    <property type="entry name" value="Globin-like_sf"/>
</dbReference>
<dbReference type="InterPro" id="IPR012292">
    <property type="entry name" value="Globin/Proto"/>
</dbReference>
<dbReference type="InterPro" id="IPR001032">
    <property type="entry name" value="Leghaemoglobin-like"/>
</dbReference>
<dbReference type="InterPro" id="IPR019824">
    <property type="entry name" value="Leghaemoglobin_Fe_BS"/>
</dbReference>
<dbReference type="PANTHER" id="PTHR22924">
    <property type="entry name" value="LEGHEMOGLOBIN-RELATED"/>
    <property type="match status" value="1"/>
</dbReference>
<dbReference type="PANTHER" id="PTHR22924:SF92">
    <property type="entry name" value="NON-SYMBIOTIC HEMOGLOBIN 2"/>
    <property type="match status" value="1"/>
</dbReference>
<dbReference type="Pfam" id="PF00042">
    <property type="entry name" value="Globin"/>
    <property type="match status" value="1"/>
</dbReference>
<dbReference type="PRINTS" id="PR00188">
    <property type="entry name" value="PLANTGLOBIN"/>
</dbReference>
<dbReference type="SUPFAM" id="SSF46458">
    <property type="entry name" value="Globin-like"/>
    <property type="match status" value="1"/>
</dbReference>
<dbReference type="PROSITE" id="PS01033">
    <property type="entry name" value="GLOBIN"/>
    <property type="match status" value="1"/>
</dbReference>
<dbReference type="PROSITE" id="PS00208">
    <property type="entry name" value="PLANT_GLOBIN"/>
    <property type="match status" value="1"/>
</dbReference>